<dbReference type="EC" id="3.5.4.25" evidence="1"/>
<dbReference type="EMBL" id="CP001217">
    <property type="protein sequence ID" value="ACJ07960.1"/>
    <property type="molecule type" value="Genomic_DNA"/>
</dbReference>
<dbReference type="SMR" id="B6JM32"/>
<dbReference type="KEGG" id="hpp:HPP12_0808"/>
<dbReference type="HOGENOM" id="CLU_020273_2_1_7"/>
<dbReference type="UniPathway" id="UPA00275">
    <property type="reaction ID" value="UER00400"/>
</dbReference>
<dbReference type="Proteomes" id="UP000008198">
    <property type="component" value="Chromosome"/>
</dbReference>
<dbReference type="GO" id="GO:0005829">
    <property type="term" value="C:cytosol"/>
    <property type="evidence" value="ECO:0007669"/>
    <property type="project" value="TreeGrafter"/>
</dbReference>
<dbReference type="GO" id="GO:0005525">
    <property type="term" value="F:GTP binding"/>
    <property type="evidence" value="ECO:0007669"/>
    <property type="project" value="UniProtKB-KW"/>
</dbReference>
<dbReference type="GO" id="GO:0003935">
    <property type="term" value="F:GTP cyclohydrolase II activity"/>
    <property type="evidence" value="ECO:0007669"/>
    <property type="project" value="UniProtKB-UniRule"/>
</dbReference>
<dbReference type="GO" id="GO:0008270">
    <property type="term" value="F:zinc ion binding"/>
    <property type="evidence" value="ECO:0007669"/>
    <property type="project" value="UniProtKB-UniRule"/>
</dbReference>
<dbReference type="GO" id="GO:0009231">
    <property type="term" value="P:riboflavin biosynthetic process"/>
    <property type="evidence" value="ECO:0007669"/>
    <property type="project" value="UniProtKB-UniRule"/>
</dbReference>
<dbReference type="CDD" id="cd00641">
    <property type="entry name" value="GTP_cyclohydro2"/>
    <property type="match status" value="1"/>
</dbReference>
<dbReference type="FunFam" id="3.40.50.10990:FF:000001">
    <property type="entry name" value="Riboflavin biosynthesis protein RibBA"/>
    <property type="match status" value="1"/>
</dbReference>
<dbReference type="Gene3D" id="3.40.50.10990">
    <property type="entry name" value="GTP cyclohydrolase II"/>
    <property type="match status" value="1"/>
</dbReference>
<dbReference type="HAMAP" id="MF_00179">
    <property type="entry name" value="RibA"/>
    <property type="match status" value="1"/>
</dbReference>
<dbReference type="InterPro" id="IPR032677">
    <property type="entry name" value="GTP_cyclohydro_II"/>
</dbReference>
<dbReference type="InterPro" id="IPR000926">
    <property type="entry name" value="RibA"/>
</dbReference>
<dbReference type="InterPro" id="IPR036144">
    <property type="entry name" value="RibA-like_sf"/>
</dbReference>
<dbReference type="NCBIfam" id="NF001591">
    <property type="entry name" value="PRK00393.1"/>
    <property type="match status" value="1"/>
</dbReference>
<dbReference type="NCBIfam" id="TIGR00505">
    <property type="entry name" value="ribA"/>
    <property type="match status" value="1"/>
</dbReference>
<dbReference type="PANTHER" id="PTHR21327:SF18">
    <property type="entry name" value="3,4-DIHYDROXY-2-BUTANONE 4-PHOSPHATE SYNTHASE"/>
    <property type="match status" value="1"/>
</dbReference>
<dbReference type="PANTHER" id="PTHR21327">
    <property type="entry name" value="GTP CYCLOHYDROLASE II-RELATED"/>
    <property type="match status" value="1"/>
</dbReference>
<dbReference type="Pfam" id="PF00925">
    <property type="entry name" value="GTP_cyclohydro2"/>
    <property type="match status" value="1"/>
</dbReference>
<dbReference type="SUPFAM" id="SSF142695">
    <property type="entry name" value="RibA-like"/>
    <property type="match status" value="1"/>
</dbReference>
<feature type="chain" id="PRO_1000098267" description="GTP cyclohydrolase-2">
    <location>
        <begin position="1"/>
        <end position="192"/>
    </location>
</feature>
<feature type="active site" description="Proton acceptor" evidence="1">
    <location>
        <position position="126"/>
    </location>
</feature>
<feature type="active site" description="Nucleophile" evidence="1">
    <location>
        <position position="128"/>
    </location>
</feature>
<feature type="binding site" evidence="1">
    <location>
        <begin position="50"/>
        <end position="54"/>
    </location>
    <ligand>
        <name>GTP</name>
        <dbReference type="ChEBI" id="CHEBI:37565"/>
    </ligand>
</feature>
<feature type="binding site" evidence="1">
    <location>
        <position position="55"/>
    </location>
    <ligand>
        <name>Zn(2+)</name>
        <dbReference type="ChEBI" id="CHEBI:29105"/>
        <note>catalytic</note>
    </ligand>
</feature>
<feature type="binding site" evidence="1">
    <location>
        <position position="66"/>
    </location>
    <ligand>
        <name>Zn(2+)</name>
        <dbReference type="ChEBI" id="CHEBI:29105"/>
        <note>catalytic</note>
    </ligand>
</feature>
<feature type="binding site" evidence="1">
    <location>
        <position position="68"/>
    </location>
    <ligand>
        <name>Zn(2+)</name>
        <dbReference type="ChEBI" id="CHEBI:29105"/>
        <note>catalytic</note>
    </ligand>
</feature>
<feature type="binding site" evidence="1">
    <location>
        <begin position="92"/>
        <end position="94"/>
    </location>
    <ligand>
        <name>GTP</name>
        <dbReference type="ChEBI" id="CHEBI:37565"/>
    </ligand>
</feature>
<feature type="binding site" evidence="1">
    <location>
        <position position="114"/>
    </location>
    <ligand>
        <name>GTP</name>
        <dbReference type="ChEBI" id="CHEBI:37565"/>
    </ligand>
</feature>
<feature type="binding site" evidence="1">
    <location>
        <position position="149"/>
    </location>
    <ligand>
        <name>GTP</name>
        <dbReference type="ChEBI" id="CHEBI:37565"/>
    </ligand>
</feature>
<feature type="binding site" evidence="1">
    <location>
        <position position="154"/>
    </location>
    <ligand>
        <name>GTP</name>
        <dbReference type="ChEBI" id="CHEBI:37565"/>
    </ligand>
</feature>
<evidence type="ECO:0000255" key="1">
    <source>
        <dbReference type="HAMAP-Rule" id="MF_00179"/>
    </source>
</evidence>
<comment type="function">
    <text evidence="1">Catalyzes the conversion of GTP to 2,5-diamino-6-ribosylamino-4(3H)-pyrimidinone 5'-phosphate (DARP), formate and pyrophosphate.</text>
</comment>
<comment type="catalytic activity">
    <reaction evidence="1">
        <text>GTP + 4 H2O = 2,5-diamino-6-hydroxy-4-(5-phosphoribosylamino)-pyrimidine + formate + 2 phosphate + 3 H(+)</text>
        <dbReference type="Rhea" id="RHEA:23704"/>
        <dbReference type="ChEBI" id="CHEBI:15377"/>
        <dbReference type="ChEBI" id="CHEBI:15378"/>
        <dbReference type="ChEBI" id="CHEBI:15740"/>
        <dbReference type="ChEBI" id="CHEBI:37565"/>
        <dbReference type="ChEBI" id="CHEBI:43474"/>
        <dbReference type="ChEBI" id="CHEBI:58614"/>
        <dbReference type="EC" id="3.5.4.25"/>
    </reaction>
</comment>
<comment type="cofactor">
    <cofactor evidence="1">
        <name>Zn(2+)</name>
        <dbReference type="ChEBI" id="CHEBI:29105"/>
    </cofactor>
    <text evidence="1">Binds 1 zinc ion per subunit.</text>
</comment>
<comment type="pathway">
    <text evidence="1">Cofactor biosynthesis; riboflavin biosynthesis; 5-amino-6-(D-ribitylamino)uracil from GTP: step 1/4.</text>
</comment>
<comment type="similarity">
    <text evidence="1">Belongs to the GTP cyclohydrolase II family.</text>
</comment>
<reference key="1">
    <citation type="submission" date="2008-10" db="EMBL/GenBank/DDBJ databases">
        <title>The complete genome sequence of Helicobacter pylori strain P12.</title>
        <authorList>
            <person name="Fischer W."/>
            <person name="Windhager L."/>
            <person name="Karnholz A."/>
            <person name="Zeiller M."/>
            <person name="Zimmer R."/>
            <person name="Haas R."/>
        </authorList>
    </citation>
    <scope>NUCLEOTIDE SEQUENCE [LARGE SCALE GENOMIC DNA]</scope>
    <source>
        <strain>P12</strain>
    </source>
</reference>
<keyword id="KW-0342">GTP-binding</keyword>
<keyword id="KW-0378">Hydrolase</keyword>
<keyword id="KW-0479">Metal-binding</keyword>
<keyword id="KW-0547">Nucleotide-binding</keyword>
<keyword id="KW-0686">Riboflavin biosynthesis</keyword>
<keyword id="KW-0862">Zinc</keyword>
<gene>
    <name evidence="1" type="primary">ribA</name>
    <name type="ordered locus">HPP12_0808</name>
</gene>
<protein>
    <recommendedName>
        <fullName evidence="1">GTP cyclohydrolase-2</fullName>
        <ecNumber evidence="1">3.5.4.25</ecNumber>
    </recommendedName>
    <alternativeName>
        <fullName evidence="1">GTP cyclohydrolase II</fullName>
    </alternativeName>
</protein>
<name>RIBA_HELP2</name>
<proteinExistence type="inferred from homology"/>
<sequence>MKRLEVSNQAKLPTQFGEFYIQCFREKGSNGSKDHLVVFTPNFSQNPLVRLHSECLTGDALGSQKCDCGGALQMALERISKEGGLVIYLRQEGRGIGLFNKVNAYALQDKGYDTIQANEMIGFKDDERDYSVAGEILEYYRIKKMRLLTNNPKKIAALEKYAEVTRESLIVCANEHNQGYLEVKKLKMGHLL</sequence>
<organism>
    <name type="scientific">Helicobacter pylori (strain P12)</name>
    <dbReference type="NCBI Taxonomy" id="570508"/>
    <lineage>
        <taxon>Bacteria</taxon>
        <taxon>Pseudomonadati</taxon>
        <taxon>Campylobacterota</taxon>
        <taxon>Epsilonproteobacteria</taxon>
        <taxon>Campylobacterales</taxon>
        <taxon>Helicobacteraceae</taxon>
        <taxon>Helicobacter</taxon>
    </lineage>
</organism>
<accession>B6JM32</accession>